<proteinExistence type="inferred from homology"/>
<reference key="1">
    <citation type="journal article" date="2003" name="Proc. Natl. Acad. Sci. U.S.A.">
        <title>The complete genome sequence of Mycobacterium bovis.</title>
        <authorList>
            <person name="Garnier T."/>
            <person name="Eiglmeier K."/>
            <person name="Camus J.-C."/>
            <person name="Medina N."/>
            <person name="Mansoor H."/>
            <person name="Pryor M."/>
            <person name="Duthoy S."/>
            <person name="Grondin S."/>
            <person name="Lacroix C."/>
            <person name="Monsempe C."/>
            <person name="Simon S."/>
            <person name="Harris B."/>
            <person name="Atkin R."/>
            <person name="Doggett J."/>
            <person name="Mayes R."/>
            <person name="Keating L."/>
            <person name="Wheeler P.R."/>
            <person name="Parkhill J."/>
            <person name="Barrell B.G."/>
            <person name="Cole S.T."/>
            <person name="Gordon S.V."/>
            <person name="Hewinson R.G."/>
        </authorList>
    </citation>
    <scope>NUCLEOTIDE SEQUENCE [LARGE SCALE GENOMIC DNA]</scope>
    <source>
        <strain>ATCC BAA-935 / AF2122/97</strain>
    </source>
</reference>
<reference key="2">
    <citation type="journal article" date="2017" name="Genome Announc.">
        <title>Updated reference genome sequence and annotation of Mycobacterium bovis AF2122/97.</title>
        <authorList>
            <person name="Malone K.M."/>
            <person name="Farrell D."/>
            <person name="Stuber T.P."/>
            <person name="Schubert O.T."/>
            <person name="Aebersold R."/>
            <person name="Robbe-Austerman S."/>
            <person name="Gordon S.V."/>
        </authorList>
    </citation>
    <scope>NUCLEOTIDE SEQUENCE [LARGE SCALE GENOMIC DNA]</scope>
    <scope>GENOME REANNOTATION</scope>
    <source>
        <strain>ATCC BAA-935 / AF2122/97</strain>
    </source>
</reference>
<sequence length="163" mass="17892">MSDPLHVTFVCTGNICRSPMAEKMFAQQLRHRGLGDAVRVTSAGTGNWHVGSCADERAAGVLRAHGYPTDHRAAQVGTEHLAADLLVALDRNHARLLRQLGVEAARVRMLRSFDPRSGTHALDVEDPYYGDHSDFEEVFAVIESALPGLHDWVDERLARNGPS</sequence>
<gene>
    <name type="primary">ptpA</name>
    <name type="ordered locus">BQ2027_MB2258</name>
</gene>
<organism>
    <name type="scientific">Mycobacterium bovis (strain ATCC BAA-935 / AF2122/97)</name>
    <dbReference type="NCBI Taxonomy" id="233413"/>
    <lineage>
        <taxon>Bacteria</taxon>
        <taxon>Bacillati</taxon>
        <taxon>Actinomycetota</taxon>
        <taxon>Actinomycetes</taxon>
        <taxon>Mycobacteriales</taxon>
        <taxon>Mycobacteriaceae</taxon>
        <taxon>Mycobacterium</taxon>
        <taxon>Mycobacterium tuberculosis complex</taxon>
    </lineage>
</organism>
<keyword id="KW-0378">Hydrolase</keyword>
<keyword id="KW-0904">Protein phosphatase</keyword>
<keyword id="KW-1185">Reference proteome</keyword>
<keyword id="KW-0843">Virulence</keyword>
<name>PTPA_MYCBO</name>
<protein>
    <recommendedName>
        <fullName evidence="1">Low molecular weight protein-tyrosine phosphatase A</fullName>
        <shortName evidence="1">LMW-PTP</shortName>
        <shortName evidence="1">PTPase</shortName>
        <ecNumber evidence="1">3.1.3.48</ecNumber>
    </recommendedName>
    <alternativeName>
        <fullName evidence="1">Low molecular weight tyrosine phosphatase PtpA</fullName>
    </alternativeName>
</protein>
<dbReference type="EC" id="3.1.3.48" evidence="1"/>
<dbReference type="EMBL" id="LT708304">
    <property type="protein sequence ID" value="SIU00868.1"/>
    <property type="molecule type" value="Genomic_DNA"/>
</dbReference>
<dbReference type="RefSeq" id="NP_855907.1">
    <property type="nucleotide sequence ID" value="NC_002945.3"/>
</dbReference>
<dbReference type="RefSeq" id="WP_003411510.1">
    <property type="nucleotide sequence ID" value="NC_002945.4"/>
</dbReference>
<dbReference type="BMRB" id="P65717"/>
<dbReference type="SMR" id="P65717"/>
<dbReference type="GeneID" id="45426212"/>
<dbReference type="KEGG" id="mbo:BQ2027_MB2258"/>
<dbReference type="PATRIC" id="fig|233413.5.peg.2478"/>
<dbReference type="Proteomes" id="UP000001419">
    <property type="component" value="Chromosome"/>
</dbReference>
<dbReference type="GO" id="GO:0004725">
    <property type="term" value="F:protein tyrosine phosphatase activity"/>
    <property type="evidence" value="ECO:0007669"/>
    <property type="project" value="UniProtKB-EC"/>
</dbReference>
<dbReference type="CDD" id="cd16343">
    <property type="entry name" value="LMWPTP"/>
    <property type="match status" value="1"/>
</dbReference>
<dbReference type="Gene3D" id="3.40.50.2300">
    <property type="match status" value="1"/>
</dbReference>
<dbReference type="InterPro" id="IPR050438">
    <property type="entry name" value="LMW_PTPase"/>
</dbReference>
<dbReference type="InterPro" id="IPR023485">
    <property type="entry name" value="Ptyr_pPase"/>
</dbReference>
<dbReference type="InterPro" id="IPR036196">
    <property type="entry name" value="Ptyr_pPase_sf"/>
</dbReference>
<dbReference type="InterPro" id="IPR017867">
    <property type="entry name" value="Tyr_phospatase_low_mol_wt"/>
</dbReference>
<dbReference type="PANTHER" id="PTHR11717:SF7">
    <property type="entry name" value="LOW MOLECULAR WEIGHT PHOSPHOTYROSINE PROTEIN PHOSPHATASE"/>
    <property type="match status" value="1"/>
</dbReference>
<dbReference type="PANTHER" id="PTHR11717">
    <property type="entry name" value="LOW MOLECULAR WEIGHT PROTEIN TYROSINE PHOSPHATASE"/>
    <property type="match status" value="1"/>
</dbReference>
<dbReference type="Pfam" id="PF01451">
    <property type="entry name" value="LMWPc"/>
    <property type="match status" value="1"/>
</dbReference>
<dbReference type="PRINTS" id="PR00719">
    <property type="entry name" value="LMWPTPASE"/>
</dbReference>
<dbReference type="SMART" id="SM00226">
    <property type="entry name" value="LMWPc"/>
    <property type="match status" value="1"/>
</dbReference>
<dbReference type="SUPFAM" id="SSF52788">
    <property type="entry name" value="Phosphotyrosine protein phosphatases I"/>
    <property type="match status" value="1"/>
</dbReference>
<feature type="chain" id="PRO_0000046568" description="Low molecular weight protein-tyrosine phosphatase A">
    <location>
        <begin position="1"/>
        <end position="163"/>
    </location>
</feature>
<feature type="active site" description="Nucleophile" evidence="1">
    <location>
        <position position="11"/>
    </location>
</feature>
<feature type="active site" evidence="1">
    <location>
        <position position="17"/>
    </location>
</feature>
<feature type="active site" description="Proton donor" evidence="1">
    <location>
        <position position="126"/>
    </location>
</feature>
<comment type="function">
    <text evidence="1">Key virulence factor required for mycobacterial survival within host macrophages (By similarity). Exhibits protein tyrosine phosphatase activity (By similarity).</text>
</comment>
<comment type="function">
    <text evidence="1">Supports mycobacteria survival during infection by modulation of the phagosome maturation and modulation of the normal host signaling pathways, including host innate immune responses and cell apoptosis.</text>
</comment>
<comment type="catalytic activity">
    <reaction evidence="1">
        <text>O-phospho-L-tyrosyl-[protein] + H2O = L-tyrosyl-[protein] + phosphate</text>
        <dbReference type="Rhea" id="RHEA:10684"/>
        <dbReference type="Rhea" id="RHEA-COMP:10136"/>
        <dbReference type="Rhea" id="RHEA-COMP:20101"/>
        <dbReference type="ChEBI" id="CHEBI:15377"/>
        <dbReference type="ChEBI" id="CHEBI:43474"/>
        <dbReference type="ChEBI" id="CHEBI:46858"/>
        <dbReference type="ChEBI" id="CHEBI:61978"/>
        <dbReference type="EC" id="3.1.3.48"/>
    </reaction>
    <physiologicalReaction direction="left-to-right" evidence="1">
        <dbReference type="Rhea" id="RHEA:10685"/>
    </physiologicalReaction>
</comment>
<comment type="similarity">
    <text evidence="2">Belongs to the low molecular weight phosphotyrosine protein phosphatase family.</text>
</comment>
<evidence type="ECO:0000250" key="1">
    <source>
        <dbReference type="UniProtKB" id="P9WIA1"/>
    </source>
</evidence>
<evidence type="ECO:0000305" key="2"/>
<accession>P65717</accession>
<accession>A0A1R3Y0K0</accession>
<accession>Q10507</accession>
<accession>X2BK81</accession>